<proteinExistence type="evidence at protein level"/>
<name>PLET1_MESAU</name>
<comment type="function">
    <text evidence="1">Modulates leading keratinocyte migration and cellular adhesion to matrix proteins during a wound-healing response and promotes wound repair. May play a role during trichilemmal differentiation of the hair follicle (By similarity).</text>
</comment>
<comment type="subcellular location">
    <subcellularLocation>
        <location evidence="1">Apical cell membrane</location>
        <topology evidence="1">Lipid-anchor</topology>
        <topology evidence="1">GPI-anchor</topology>
    </subcellularLocation>
    <text evidence="1">Localized at the apical membrane of the most differentiated keratinocytes of the outer root sheath (ORS), clustered mainly in planar regions of the plasma membrane at the base of microvilli.</text>
</comment>
<comment type="tissue specificity">
    <text evidence="3">Present at high level in the dermal sheath cells near the bulge area of the hair follicle and in the differentiated sebocytes of the normal adult skin (at protein level).</text>
</comment>
<comment type="induction">
    <text evidence="3">Following tissue damages of the skin.</text>
</comment>
<comment type="PTM">
    <text evidence="1">N-glycosylated.</text>
</comment>
<comment type="PTM">
    <text evidence="1">GPI-anchored.</text>
</comment>
<feature type="signal peptide" evidence="2">
    <location>
        <begin position="1"/>
        <end position="26"/>
    </location>
</feature>
<feature type="chain" id="PRO_0000320953" description="Placenta-expressed transcript 1 protein">
    <location>
        <begin position="27"/>
        <end position="223"/>
    </location>
</feature>
<feature type="propeptide" id="PRO_0000424668" description="Removed in mature form" evidence="2">
    <location>
        <begin position="224"/>
        <end position="242"/>
    </location>
</feature>
<feature type="lipid moiety-binding region" description="GPI-anchor amidated serine" evidence="2">
    <location>
        <position position="223"/>
    </location>
</feature>
<feature type="glycosylation site" description="N-linked (GlcNAc...) asparagine" evidence="2">
    <location>
        <position position="47"/>
    </location>
</feature>
<feature type="glycosylation site" description="N-linked (GlcNAc...) asparagine" evidence="2">
    <location>
        <position position="56"/>
    </location>
</feature>
<feature type="glycosylation site" description="N-linked (GlcNAc...) asparagine" evidence="2">
    <location>
        <position position="66"/>
    </location>
</feature>
<reference key="1">
    <citation type="journal article" date="2004" name="Biol. Pharm. Bull.">
        <title>Identification of the novel membrane-associated protein AgK114 on hamster keratinocytes recognized by a monoclonal antibody K114.</title>
        <authorList>
            <person name="Tatefuji T."/>
            <person name="Arai C."/>
            <person name="Okura T."/>
            <person name="Kayano T."/>
            <person name="Mori T."/>
            <person name="Takakura-Yamamoto R."/>
            <person name="Takeuchi M."/>
            <person name="Ohta T."/>
            <person name="Kurimoto M."/>
        </authorList>
    </citation>
    <scope>NUCLEOTIDE SEQUENCE [MRNA]</scope>
    <scope>TISSUE SPECIFICITY</scope>
    <scope>INDUCTION</scope>
</reference>
<dbReference type="EMBL" id="AB154828">
    <property type="protein sequence ID" value="BAD69587.1"/>
    <property type="molecule type" value="mRNA"/>
</dbReference>
<dbReference type="STRING" id="10036.ENSMAUP00000010680"/>
<dbReference type="GlyCosmos" id="Q5W9T8">
    <property type="glycosylation" value="3 sites, No reported glycans"/>
</dbReference>
<dbReference type="eggNOG" id="ENOG502RTZP">
    <property type="taxonomic scope" value="Eukaryota"/>
</dbReference>
<dbReference type="OrthoDB" id="9446289at2759"/>
<dbReference type="Proteomes" id="UP000189706">
    <property type="component" value="Unplaced"/>
</dbReference>
<dbReference type="GO" id="GO:0016324">
    <property type="term" value="C:apical plasma membrane"/>
    <property type="evidence" value="ECO:0000250"/>
    <property type="project" value="UniProtKB"/>
</dbReference>
<dbReference type="GO" id="GO:0009897">
    <property type="term" value="C:external side of plasma membrane"/>
    <property type="evidence" value="ECO:0007669"/>
    <property type="project" value="TreeGrafter"/>
</dbReference>
<dbReference type="GO" id="GO:0030154">
    <property type="term" value="P:cell differentiation"/>
    <property type="evidence" value="ECO:0007669"/>
    <property type="project" value="UniProtKB-KW"/>
</dbReference>
<dbReference type="GO" id="GO:0001953">
    <property type="term" value="P:negative regulation of cell-matrix adhesion"/>
    <property type="evidence" value="ECO:0000250"/>
    <property type="project" value="UniProtKB"/>
</dbReference>
<dbReference type="GO" id="GO:0030335">
    <property type="term" value="P:positive regulation of cell migration"/>
    <property type="evidence" value="ECO:0000250"/>
    <property type="project" value="UniProtKB"/>
</dbReference>
<dbReference type="GO" id="GO:0035313">
    <property type="term" value="P:wound healing, spreading of epidermal cells"/>
    <property type="evidence" value="ECO:0000250"/>
    <property type="project" value="UniProtKB"/>
</dbReference>
<dbReference type="InterPro" id="IPR026184">
    <property type="entry name" value="PLET1"/>
</dbReference>
<dbReference type="PANTHER" id="PTHR22527">
    <property type="entry name" value="PLACENTA-EXPRESSED TRANSCRIPT 1 PROTEIN"/>
    <property type="match status" value="1"/>
</dbReference>
<dbReference type="PANTHER" id="PTHR22527:SF2">
    <property type="entry name" value="PLACENTA-EXPRESSED TRANSCRIPT 1 PROTEIN"/>
    <property type="match status" value="1"/>
</dbReference>
<protein>
    <recommendedName>
        <fullName>Placenta-expressed transcript 1 protein</fullName>
    </recommendedName>
    <alternativeName>
        <fullName>Antigen AgK114</fullName>
    </alternativeName>
</protein>
<organism>
    <name type="scientific">Mesocricetus auratus</name>
    <name type="common">Golden hamster</name>
    <dbReference type="NCBI Taxonomy" id="10036"/>
    <lineage>
        <taxon>Eukaryota</taxon>
        <taxon>Metazoa</taxon>
        <taxon>Chordata</taxon>
        <taxon>Craniata</taxon>
        <taxon>Vertebrata</taxon>
        <taxon>Euteleostomi</taxon>
        <taxon>Mammalia</taxon>
        <taxon>Eutheria</taxon>
        <taxon>Euarchontoglires</taxon>
        <taxon>Glires</taxon>
        <taxon>Rodentia</taxon>
        <taxon>Myomorpha</taxon>
        <taxon>Muroidea</taxon>
        <taxon>Cricetidae</taxon>
        <taxon>Cricetinae</taxon>
        <taxon>Mesocricetus</taxon>
    </lineage>
</organism>
<sequence>MAVLRSLLPQLGLFLCLALCFSPALSASYNDPCTVFDTISTTNLRVNITAEGSGENITYTVWVHVNSSVSVVILKAVNQDNKPVGTWVGATQECNDSSVLYRVTPSDNSDFQATWIVPNSEDITKVNLHVLMAIGNGTAAVTSVNLGEPQTSTPLRPTPEISETNQTTTMTTDKTPAMTTAKTPAMTTAKTTAKTTAKTTVKTTAMTTAKTTAKSLAVNALGSPLAGALHILLVFLISKLLF</sequence>
<accession>Q5W9T8</accession>
<keyword id="KW-1003">Cell membrane</keyword>
<keyword id="KW-0221">Differentiation</keyword>
<keyword id="KW-0325">Glycoprotein</keyword>
<keyword id="KW-0336">GPI-anchor</keyword>
<keyword id="KW-0449">Lipoprotein</keyword>
<keyword id="KW-0472">Membrane</keyword>
<keyword id="KW-1185">Reference proteome</keyword>
<keyword id="KW-0732">Signal</keyword>
<evidence type="ECO:0000250" key="1"/>
<evidence type="ECO:0000255" key="2"/>
<evidence type="ECO:0000269" key="3">
    <source>
    </source>
</evidence>
<gene>
    <name type="primary">PLET1</name>
</gene>